<organism>
    <name type="scientific">Halorubrum lacusprofundi (strain ATCC 49239 / DSM 5036 / JCM 8891 / ACAM 34)</name>
    <dbReference type="NCBI Taxonomy" id="416348"/>
    <lineage>
        <taxon>Archaea</taxon>
        <taxon>Methanobacteriati</taxon>
        <taxon>Methanobacteriota</taxon>
        <taxon>Stenosarchaea group</taxon>
        <taxon>Halobacteria</taxon>
        <taxon>Halobacteriales</taxon>
        <taxon>Haloferacaceae</taxon>
        <taxon>Halorubrum</taxon>
    </lineage>
</organism>
<proteinExistence type="inferred from homology"/>
<accession>B9LUU4</accession>
<keyword id="KW-0143">Chaperone</keyword>
<keyword id="KW-0963">Cytoplasm</keyword>
<keyword id="KW-1185">Reference proteome</keyword>
<protein>
    <recommendedName>
        <fullName evidence="1">Prefoldin subunit alpha</fullName>
    </recommendedName>
    <alternativeName>
        <fullName evidence="1">GimC subunit alpha</fullName>
    </alternativeName>
</protein>
<feature type="chain" id="PRO_1000132879" description="Prefoldin subunit alpha">
    <location>
        <begin position="1"/>
        <end position="152"/>
    </location>
</feature>
<feature type="region of interest" description="Disordered" evidence="2">
    <location>
        <begin position="110"/>
        <end position="152"/>
    </location>
</feature>
<feature type="compositionally biased region" description="Acidic residues" evidence="2">
    <location>
        <begin position="111"/>
        <end position="124"/>
    </location>
</feature>
<feature type="compositionally biased region" description="Low complexity" evidence="2">
    <location>
        <begin position="125"/>
        <end position="152"/>
    </location>
</feature>
<reference key="1">
    <citation type="journal article" date="2016" name="Stand. Genomic Sci.">
        <title>Complete genome sequence of the Antarctic Halorubrum lacusprofundi type strain ACAM 34.</title>
        <authorList>
            <person name="Anderson I.J."/>
            <person name="DasSarma P."/>
            <person name="Lucas S."/>
            <person name="Copeland A."/>
            <person name="Lapidus A."/>
            <person name="Del Rio T.G."/>
            <person name="Tice H."/>
            <person name="Dalin E."/>
            <person name="Bruce D.C."/>
            <person name="Goodwin L."/>
            <person name="Pitluck S."/>
            <person name="Sims D."/>
            <person name="Brettin T.S."/>
            <person name="Detter J.C."/>
            <person name="Han C.S."/>
            <person name="Larimer F."/>
            <person name="Hauser L."/>
            <person name="Land M."/>
            <person name="Ivanova N."/>
            <person name="Richardson P."/>
            <person name="Cavicchioli R."/>
            <person name="DasSarma S."/>
            <person name="Woese C.R."/>
            <person name="Kyrpides N.C."/>
        </authorList>
    </citation>
    <scope>NUCLEOTIDE SEQUENCE [LARGE SCALE GENOMIC DNA]</scope>
    <source>
        <strain>ATCC 49239 / DSM 5036 / JCM 8891 / ACAM 34</strain>
    </source>
</reference>
<evidence type="ECO:0000255" key="1">
    <source>
        <dbReference type="HAMAP-Rule" id="MF_00308"/>
    </source>
</evidence>
<evidence type="ECO:0000256" key="2">
    <source>
        <dbReference type="SAM" id="MobiDB-lite"/>
    </source>
</evidence>
<comment type="function">
    <text evidence="1">Molecular chaperone capable of stabilizing a range of proteins. Seems to fulfill an ATP-independent, HSP70-like function in archaeal de novo protein folding.</text>
</comment>
<comment type="subunit">
    <text evidence="1">Heterohexamer of two alpha and four beta subunits.</text>
</comment>
<comment type="subcellular location">
    <subcellularLocation>
        <location evidence="1">Cytoplasm</location>
    </subcellularLocation>
</comment>
<comment type="similarity">
    <text evidence="1">Belongs to the prefoldin alpha subunit family.</text>
</comment>
<name>PFDA_HALLT</name>
<gene>
    <name evidence="1" type="primary">pfdA</name>
    <name type="ordered locus">Hlac_0822</name>
</gene>
<sequence length="152" mass="17098">MMGGGQQQLQQLSQELQALDEEIEALEVEIDDHREEQSDIDDAIEAIETLDSGSTVQVPLGGGAYVRAEVQDIDEIIVSLGGNYSAEQSEEDAIDVLGRKRDALDDRIEETQEEVDELESESQELEQQAQQMQQQMQQQQMQQMQQSQGDEE</sequence>
<dbReference type="EMBL" id="CP001365">
    <property type="protein sequence ID" value="ACM56421.1"/>
    <property type="molecule type" value="Genomic_DNA"/>
</dbReference>
<dbReference type="SMR" id="B9LUU4"/>
<dbReference type="KEGG" id="hla:Hlac_0822"/>
<dbReference type="eggNOG" id="arCOG01341">
    <property type="taxonomic scope" value="Archaea"/>
</dbReference>
<dbReference type="HOGENOM" id="CLU_091867_1_3_2"/>
<dbReference type="Proteomes" id="UP000000740">
    <property type="component" value="Chromosome 1"/>
</dbReference>
<dbReference type="GO" id="GO:0005737">
    <property type="term" value="C:cytoplasm"/>
    <property type="evidence" value="ECO:0007669"/>
    <property type="project" value="UniProtKB-SubCell"/>
</dbReference>
<dbReference type="GO" id="GO:0016272">
    <property type="term" value="C:prefoldin complex"/>
    <property type="evidence" value="ECO:0007669"/>
    <property type="project" value="UniProtKB-UniRule"/>
</dbReference>
<dbReference type="GO" id="GO:0051082">
    <property type="term" value="F:unfolded protein binding"/>
    <property type="evidence" value="ECO:0007669"/>
    <property type="project" value="UniProtKB-UniRule"/>
</dbReference>
<dbReference type="GO" id="GO:0006457">
    <property type="term" value="P:protein folding"/>
    <property type="evidence" value="ECO:0007669"/>
    <property type="project" value="UniProtKB-UniRule"/>
</dbReference>
<dbReference type="CDD" id="cd00584">
    <property type="entry name" value="Prefoldin_alpha"/>
    <property type="match status" value="1"/>
</dbReference>
<dbReference type="Gene3D" id="1.10.287.370">
    <property type="match status" value="1"/>
</dbReference>
<dbReference type="HAMAP" id="MF_00308">
    <property type="entry name" value="PfdA"/>
    <property type="match status" value="1"/>
</dbReference>
<dbReference type="InterPro" id="IPR011599">
    <property type="entry name" value="PFD_alpha_archaea"/>
</dbReference>
<dbReference type="InterPro" id="IPR009053">
    <property type="entry name" value="Prefoldin"/>
</dbReference>
<dbReference type="InterPro" id="IPR004127">
    <property type="entry name" value="Prefoldin_subunit_alpha"/>
</dbReference>
<dbReference type="NCBIfam" id="TIGR00293">
    <property type="entry name" value="prefoldin subunit alpha"/>
    <property type="match status" value="1"/>
</dbReference>
<dbReference type="PANTHER" id="PTHR12674">
    <property type="entry name" value="PREFOLDIN SUBUNIT 5"/>
    <property type="match status" value="1"/>
</dbReference>
<dbReference type="PANTHER" id="PTHR12674:SF2">
    <property type="entry name" value="PREFOLDIN SUBUNIT 5"/>
    <property type="match status" value="1"/>
</dbReference>
<dbReference type="Pfam" id="PF02996">
    <property type="entry name" value="Prefoldin"/>
    <property type="match status" value="1"/>
</dbReference>
<dbReference type="SUPFAM" id="SSF46579">
    <property type="entry name" value="Prefoldin"/>
    <property type="match status" value="1"/>
</dbReference>